<proteinExistence type="evidence at protein level"/>
<comment type="function">
    <text evidence="4 6 7 8 9 10 11 12 13 14 15 16">Inhibitory receptor involved in the down-regulation of the immune response (PubMed:10026201, PubMed:24935931). Receptor for FN1 (PubMed:34089617). Receptor for integrin ITGAV/ITGB3 (PubMed:11323698). Inhibits IgE-mediated mast cell activation, at least in part through interaction with ITGAV/ITGB3 (PubMed:10026201, PubMed:11323698, PubMed:11457897, PubMed:8855262). Also inhibits KITLG/SCF-mediated mast cell activation (PubMed:12884301). Through interaction with ITGAV/ITGB3, inhibits antibody production by memory and marginal zone B cells, probably by suppressing their differentiation into plasma cells (PubMed:24935931). Inhibits IFNG production by CD8 T cells, CD4 T cells and natural killer cells (PubMed:12682239). Inhibits antigen presentation by dendritic cells to T cells, preventing T cell activation (PubMed:18792399). Inhibits lipopolysaccharide-mediated neutrophil-dependent vascular injury (PubMed:14557414). Suppresses the allergic inflammatory response by inhibiting infiltration of neutrophils and eosinophils and preventing mast cell degranulation (PubMed:17761953). Inhibits lysis by natural killer cells (PubMed:8977169).</text>
</comment>
<comment type="subunit">
    <text evidence="4 20">Interacts (when tyrosine phosphorylated) with SH2 domain-containing phosphatases PTPN6/SHP-1 and PTPN11/SHP-2; interaction with PTPN6 enhances inhibition of mast cell activation.</text>
</comment>
<comment type="subcellular location">
    <subcellularLocation>
        <location evidence="5 6 15 16">Cell membrane</location>
        <topology evidence="2">Single-pass type I membrane protein</topology>
    </subcellularLocation>
</comment>
<comment type="alternative products">
    <event type="alternative splicing"/>
    <isoform>
        <id>Q64281-1</id>
        <name>1</name>
        <name evidence="21">GP49B1</name>
        <sequence type="displayed"/>
    </isoform>
    <isoform>
        <id>Q64281-2</id>
        <name>2</name>
        <name evidence="21">GP49B2</name>
        <sequence type="described" ref="VSP_002510 VSP_002511"/>
    </isoform>
</comment>
<comment type="tissue specificity">
    <text evidence="7 8 10 11 12 13 16 17 18">Expressed on mast cells and natural killer cells (at protein level) (PubMed:11457897, PubMed:8977169, PubMed:8977170). Expressed on neutrophils (at protein level) (PubMed:14557414). Expressed on eosinophils (at protein level) (PubMed:17761953). Expressed on dendritic cells (at protein level) (PubMed:18792399). Expressed on memory and marginal zone B cells (at protein level) (PubMed:24935931). Expressed on CD8 T cells (at protein level) (PubMed:12682239). Expressed in the uterus of pregnant mice where it is detected at day 4.0 of pregnancy with levels dropping at day 4.5 (PubMed:9338594). Highly expressed in the luminal epithelium of uterine endometrium with lower levels in the glandular epithelium (PubMed:9338594).</text>
</comment>
<comment type="induction">
    <text evidence="10 18">Induced by lipopolysaccharide on neutrophils (at protein level) (PubMed:14557414). Induced by IL6 and LIF (PubMed:9338594).</text>
</comment>
<comment type="domain">
    <text evidence="15 19 20">Contains 2 copies of a cytoplasmic motif that is referred to as the immunoreceptor tyrosine-based inhibitor motif (ITIM). This motif is involved in modulation of cellular responses. The phosphorylated ITIM motif can bind the SH2 domain of several SH2-containing phosphatases.</text>
</comment>
<comment type="PTM">
    <text evidence="4 20">Tyrosine phosphorylated.</text>
</comment>
<comment type="disruption phenotype">
    <text evidence="5 7 8 9 10 11 12 13">No effect on fertility or litter size (PubMed:10982834, PubMed:11457897). Normal development of mast cells and natural killer cells (PubMed:10982834). Increased severity of local and systemic anaphylactic reactions (PubMed:11457897). Significantly increased sensitivity to IgE-dependent passive cutaneous anaphylaxis with greater tissue swelling and mast cell degranulation, and significantly greater and faster death rate in active systemic anaphylaxis (PubMed:11457897). However, another study found no effect on mast cell activity with no increase in mast cell degranulation (PubMed:10982834). Macroscopic hemorrhages following intradermal injection of E.coli lipopolysaccharide with increased neutrophil numbers around the site of injection (PubMed:14557414). Normal B cell development and memory B cell formation but increased production by marginal zone and memory B cells of IgM after a primary immunization and of IgM, IgG1 and IgE after a secondary immunization (PubMed:24935931). Reduced ERK activation and reduced Prdm1/Blimp1 expression, indicative of suppression of plasma cell differentiation (PubMed:24935931). No effect on antigen uptake or cytokine production by dendritic cells but dendritic cells show enhanced antigen presentation to T cells and induce increased T cell stimulation (PubMed:18792399). Increased neutrophilia, eosinophilia and mast cell degranulation following ocular ragweed (RW) sensitization and challenge, and increased lung inflammation following RW sensitization and challenge (PubMed:17761953). Increased Kitlg/SCF-induced mast cell degranulation and tissue swelling (PubMed:12884301). Enhanced IFNG production by CD8 T cells, CD4 T cells and NK cells following viral infection (PubMed:12682239).</text>
</comment>
<gene>
    <name evidence="22" type="primary">Lilrb4a</name>
    <name evidence="21" type="synonym">Gp49b</name>
</gene>
<dbReference type="EMBL" id="U05266">
    <property type="protein sequence ID" value="AAA17799.1"/>
    <property type="molecule type" value="mRNA"/>
</dbReference>
<dbReference type="EMBL" id="U05265">
    <property type="protein sequence ID" value="AAA17797.1"/>
    <property type="molecule type" value="Unassigned_DNA"/>
</dbReference>
<dbReference type="EMBL" id="U05265">
    <property type="protein sequence ID" value="AAA17798.1"/>
    <property type="molecule type" value="Unassigned_DNA"/>
</dbReference>
<dbReference type="EMBL" id="U05264">
    <property type="protein sequence ID" value="AAA17796.1"/>
    <property type="molecule type" value="mRNA"/>
</dbReference>
<dbReference type="EMBL" id="BC006591">
    <property type="protein sequence ID" value="AAH06591.1"/>
    <property type="molecule type" value="mRNA"/>
</dbReference>
<dbReference type="CCDS" id="CCDS23832.1">
    <molecule id="Q64281-1"/>
</dbReference>
<dbReference type="PIR" id="A53434">
    <property type="entry name" value="A53434"/>
</dbReference>
<dbReference type="PIR" id="B53434">
    <property type="entry name" value="B53434"/>
</dbReference>
<dbReference type="RefSeq" id="NP_038560.1">
    <molecule id="Q64281-1"/>
    <property type="nucleotide sequence ID" value="NM_013532.4"/>
</dbReference>
<dbReference type="SMR" id="Q64281"/>
<dbReference type="BioGRID" id="200008">
    <property type="interactions" value="3"/>
</dbReference>
<dbReference type="DIP" id="DIP-46122N"/>
<dbReference type="FunCoup" id="Q64281">
    <property type="interactions" value="18"/>
</dbReference>
<dbReference type="IntAct" id="Q64281">
    <property type="interactions" value="2"/>
</dbReference>
<dbReference type="STRING" id="10090.ENSMUSP00000077833"/>
<dbReference type="MEROPS" id="I43.951"/>
<dbReference type="GlyCosmos" id="Q64281">
    <property type="glycosylation" value="2 sites, No reported glycans"/>
</dbReference>
<dbReference type="GlyGen" id="Q64281">
    <property type="glycosylation" value="2 sites"/>
</dbReference>
<dbReference type="iPTMnet" id="Q64281"/>
<dbReference type="PhosphoSitePlus" id="Q64281"/>
<dbReference type="PaxDb" id="10090-ENSMUSP00000101121"/>
<dbReference type="PeptideAtlas" id="Q64281"/>
<dbReference type="ProteomicsDB" id="290039">
    <molecule id="Q64281-2"/>
</dbReference>
<dbReference type="DNASU" id="14728"/>
<dbReference type="Ensembl" id="ENSMUST00000078778.5">
    <molecule id="Q64281-1"/>
    <property type="protein sequence ID" value="ENSMUSP00000077833.4"/>
    <property type="gene ID" value="ENSMUSG00000112148.2"/>
</dbReference>
<dbReference type="Ensembl" id="ENSMUST00000217706.2">
    <molecule id="Q64281-2"/>
    <property type="protein sequence ID" value="ENSMUSP00000151978.2"/>
    <property type="gene ID" value="ENSMUSG00000062593.18"/>
</dbReference>
<dbReference type="Ensembl" id="ENSMUST00000219696.2">
    <molecule id="Q64281-1"/>
    <property type="protein sequence ID" value="ENSMUSP00000151486.2"/>
    <property type="gene ID" value="ENSMUSG00000062593.18"/>
</dbReference>
<dbReference type="Ensembl" id="ENSMUST00000220182.2">
    <molecule id="Q64281-2"/>
    <property type="protein sequence ID" value="ENSMUSP00000151694.2"/>
    <property type="gene ID" value="ENSMUSG00000112148.2"/>
</dbReference>
<dbReference type="GeneID" id="14728"/>
<dbReference type="KEGG" id="mmu:14728"/>
<dbReference type="UCSC" id="uc007far.2">
    <molecule id="Q64281-1"/>
    <property type="organism name" value="mouse"/>
</dbReference>
<dbReference type="UCSC" id="uc011xdq.2">
    <molecule id="Q64281-2"/>
    <property type="organism name" value="mouse"/>
</dbReference>
<dbReference type="AGR" id="MGI:102701"/>
<dbReference type="CTD" id="14728"/>
<dbReference type="MGI" id="MGI:102701">
    <property type="gene designation" value="Lilrb4a"/>
</dbReference>
<dbReference type="VEuPathDB" id="HostDB:ENSMUSG00000062593"/>
<dbReference type="VEuPathDB" id="HostDB:ENSMUSG00000112148"/>
<dbReference type="eggNOG" id="ENOG502RU0A">
    <property type="taxonomic scope" value="Eukaryota"/>
</dbReference>
<dbReference type="GeneTree" id="ENSGT01100000263478"/>
<dbReference type="HOGENOM" id="CLU_021100_0_0_1"/>
<dbReference type="InParanoid" id="Q64281"/>
<dbReference type="OMA" id="QWEPERG"/>
<dbReference type="OrthoDB" id="9629903at2759"/>
<dbReference type="PhylomeDB" id="Q64281"/>
<dbReference type="TreeFam" id="TF336644"/>
<dbReference type="BioGRID-ORCS" id="14728">
    <property type="hits" value="3 hits in 46 CRISPR screens"/>
</dbReference>
<dbReference type="PRO" id="PR:Q64281"/>
<dbReference type="Proteomes" id="UP000000589">
    <property type="component" value="Chromosome 10"/>
</dbReference>
<dbReference type="RNAct" id="Q64281">
    <property type="molecule type" value="protein"/>
</dbReference>
<dbReference type="Bgee" id="ENSMUSG00000062593">
    <property type="expression patterns" value="Expressed in granulocyte and 35 other cell types or tissues"/>
</dbReference>
<dbReference type="ExpressionAtlas" id="Q64281">
    <property type="expression patterns" value="baseline and differential"/>
</dbReference>
<dbReference type="GO" id="GO:0009986">
    <property type="term" value="C:cell surface"/>
    <property type="evidence" value="ECO:0000314"/>
    <property type="project" value="UniProtKB"/>
</dbReference>
<dbReference type="GO" id="GO:0009897">
    <property type="term" value="C:external side of plasma membrane"/>
    <property type="evidence" value="ECO:0000314"/>
    <property type="project" value="MGI"/>
</dbReference>
<dbReference type="GO" id="GO:0001968">
    <property type="term" value="F:fibronectin binding"/>
    <property type="evidence" value="ECO:0000314"/>
    <property type="project" value="UniProtKB"/>
</dbReference>
<dbReference type="GO" id="GO:0005178">
    <property type="term" value="F:integrin binding"/>
    <property type="evidence" value="ECO:0000314"/>
    <property type="project" value="ARUK-UCL"/>
</dbReference>
<dbReference type="GO" id="GO:0019902">
    <property type="term" value="F:phosphatase binding"/>
    <property type="evidence" value="ECO:0000353"/>
    <property type="project" value="UniProtKB"/>
</dbReference>
<dbReference type="GO" id="GO:0019903">
    <property type="term" value="F:protein phosphatase binding"/>
    <property type="evidence" value="ECO:0000353"/>
    <property type="project" value="UniProtKB"/>
</dbReference>
<dbReference type="GO" id="GO:0002250">
    <property type="term" value="P:adaptive immune response"/>
    <property type="evidence" value="ECO:0007669"/>
    <property type="project" value="UniProtKB-KW"/>
</dbReference>
<dbReference type="GO" id="GO:0007596">
    <property type="term" value="P:blood coagulation"/>
    <property type="evidence" value="ECO:0000315"/>
    <property type="project" value="MGI"/>
</dbReference>
<dbReference type="GO" id="GO:0035739">
    <property type="term" value="P:CD4-positive, alpha-beta T cell proliferation"/>
    <property type="evidence" value="ECO:0000315"/>
    <property type="project" value="MGI"/>
</dbReference>
<dbReference type="GO" id="GO:0035740">
    <property type="term" value="P:CD8-positive, alpha-beta T cell proliferation"/>
    <property type="evidence" value="ECO:0000315"/>
    <property type="project" value="MGI"/>
</dbReference>
<dbReference type="GO" id="GO:0071222">
    <property type="term" value="P:cellular response to lipopolysaccharide"/>
    <property type="evidence" value="ECO:0000315"/>
    <property type="project" value="MGI"/>
</dbReference>
<dbReference type="GO" id="GO:0006954">
    <property type="term" value="P:inflammatory response"/>
    <property type="evidence" value="ECO:0000315"/>
    <property type="project" value="MGI"/>
</dbReference>
<dbReference type="GO" id="GO:0002437">
    <property type="term" value="P:inflammatory response to antigenic stimulus"/>
    <property type="evidence" value="ECO:0000315"/>
    <property type="project" value="MGI"/>
</dbReference>
<dbReference type="GO" id="GO:0002638">
    <property type="term" value="P:negative regulation of immunoglobulin production"/>
    <property type="evidence" value="ECO:0000315"/>
    <property type="project" value="UniProtKB"/>
</dbReference>
<dbReference type="GO" id="GO:0033004">
    <property type="term" value="P:negative regulation of mast cell activation"/>
    <property type="evidence" value="ECO:0000315"/>
    <property type="project" value="UniProtKB"/>
</dbReference>
<dbReference type="GO" id="GO:0033007">
    <property type="term" value="P:negative regulation of mast cell activation involved in immune response"/>
    <property type="evidence" value="ECO:0000314"/>
    <property type="project" value="UniProtKB"/>
</dbReference>
<dbReference type="GO" id="GO:0150102">
    <property type="term" value="P:negative regulation of monocyte activation"/>
    <property type="evidence" value="ECO:0000314"/>
    <property type="project" value="UniProtKB"/>
</dbReference>
<dbReference type="GO" id="GO:0032815">
    <property type="term" value="P:negative regulation of natural killer cell activation"/>
    <property type="evidence" value="ECO:0000314"/>
    <property type="project" value="UniProtKB"/>
</dbReference>
<dbReference type="GO" id="GO:1900099">
    <property type="term" value="P:negative regulation of plasma cell differentiation"/>
    <property type="evidence" value="ECO:0000315"/>
    <property type="project" value="UniProtKB"/>
</dbReference>
<dbReference type="GO" id="GO:0001780">
    <property type="term" value="P:neutrophil homeostasis"/>
    <property type="evidence" value="ECO:0000315"/>
    <property type="project" value="MGI"/>
</dbReference>
<dbReference type="GO" id="GO:0032496">
    <property type="term" value="P:response to lipopolysaccharide"/>
    <property type="evidence" value="ECO:0000315"/>
    <property type="project" value="MGI"/>
</dbReference>
<dbReference type="GO" id="GO:0009624">
    <property type="term" value="P:response to nematode"/>
    <property type="evidence" value="ECO:0000315"/>
    <property type="project" value="MGI"/>
</dbReference>
<dbReference type="GO" id="GO:0051707">
    <property type="term" value="P:response to other organism"/>
    <property type="evidence" value="ECO:0000315"/>
    <property type="project" value="MGI"/>
</dbReference>
<dbReference type="GO" id="GO:0009611">
    <property type="term" value="P:response to wounding"/>
    <property type="evidence" value="ECO:0000315"/>
    <property type="project" value="MGI"/>
</dbReference>
<dbReference type="GO" id="GO:0042092">
    <property type="term" value="P:type 2 immune response"/>
    <property type="evidence" value="ECO:0000315"/>
    <property type="project" value="MGI"/>
</dbReference>
<dbReference type="FunFam" id="2.60.40.10:FF:000049">
    <property type="entry name" value="Leukocyte immunoglobulin-like receptor subfamily B member 1"/>
    <property type="match status" value="2"/>
</dbReference>
<dbReference type="Gene3D" id="2.60.40.10">
    <property type="entry name" value="Immunoglobulins"/>
    <property type="match status" value="2"/>
</dbReference>
<dbReference type="InterPro" id="IPR007110">
    <property type="entry name" value="Ig-like_dom"/>
</dbReference>
<dbReference type="InterPro" id="IPR036179">
    <property type="entry name" value="Ig-like_dom_sf"/>
</dbReference>
<dbReference type="InterPro" id="IPR013783">
    <property type="entry name" value="Ig-like_fold"/>
</dbReference>
<dbReference type="InterPro" id="IPR050412">
    <property type="entry name" value="Ig-like_Receptors_ImmuneReg"/>
</dbReference>
<dbReference type="PANTHER" id="PTHR11738:SF181">
    <property type="entry name" value="LEUKOCYTE IMMUNOGLOBULIN-LIKE RECEPTOR SUBFAMILY B MEMBER 4A-RELATED"/>
    <property type="match status" value="1"/>
</dbReference>
<dbReference type="PANTHER" id="PTHR11738">
    <property type="entry name" value="MHC CLASS I NK CELL RECEPTOR"/>
    <property type="match status" value="1"/>
</dbReference>
<dbReference type="Pfam" id="PF13895">
    <property type="entry name" value="Ig_2"/>
    <property type="match status" value="2"/>
</dbReference>
<dbReference type="SUPFAM" id="SSF48726">
    <property type="entry name" value="Immunoglobulin"/>
    <property type="match status" value="2"/>
</dbReference>
<dbReference type="PROSITE" id="PS50835">
    <property type="entry name" value="IG_LIKE"/>
    <property type="match status" value="1"/>
</dbReference>
<feature type="signal peptide" evidence="1">
    <location>
        <begin position="1"/>
        <end position="23"/>
    </location>
</feature>
<feature type="chain" id="PRO_0000014824" description="Leukocyte immunoglobulin-like receptor subfamily B member 4A">
    <location>
        <begin position="24"/>
        <end position="335"/>
    </location>
</feature>
<feature type="topological domain" description="Extracellular" evidence="2">
    <location>
        <begin position="24"/>
        <end position="238"/>
    </location>
</feature>
<feature type="transmembrane region" description="Helical" evidence="2">
    <location>
        <begin position="239"/>
        <end position="260"/>
    </location>
</feature>
<feature type="topological domain" description="Cytoplasmic" evidence="2">
    <location>
        <begin position="261"/>
        <end position="335"/>
    </location>
</feature>
<feature type="domain" description="Ig-like C2-type 1">
    <location>
        <begin position="42"/>
        <end position="125"/>
    </location>
</feature>
<feature type="domain" description="Ig-like C2-type 2">
    <location>
        <begin position="124"/>
        <end position="212"/>
    </location>
</feature>
<feature type="short sequence motif" description="ITIM motif 1">
    <location>
        <begin position="298"/>
        <end position="303"/>
    </location>
</feature>
<feature type="short sequence motif" description="ITIM motif 2">
    <location>
        <begin position="320"/>
        <end position="325"/>
    </location>
</feature>
<feature type="glycosylation site" description="N-linked (GlcNAc...) asparagine" evidence="2">
    <location>
        <position position="133"/>
    </location>
</feature>
<feature type="glycosylation site" description="N-linked (GlcNAc...) asparagine" evidence="2">
    <location>
        <position position="191"/>
    </location>
</feature>
<feature type="disulfide bond" evidence="3">
    <location>
        <begin position="49"/>
        <end position="98"/>
    </location>
</feature>
<feature type="disulfide bond" evidence="3">
    <location>
        <begin position="144"/>
        <end position="196"/>
    </location>
</feature>
<feature type="splice variant" id="VSP_002510" description="In isoform 2." evidence="21">
    <original>G</original>
    <variation>D</variation>
    <location>
        <position position="232"/>
    </location>
</feature>
<feature type="splice variant" id="VSP_002511" description="In isoform 2." evidence="21">
    <location>
        <begin position="233"/>
        <end position="271"/>
    </location>
</feature>
<feature type="mutagenesis site" description="Partially suppresses inhibition of mast cell activation. Abolishes inhibition of mast cell activation; when associated with F-322." evidence="4">
    <original>Y</original>
    <variation>F</variation>
    <location>
        <position position="300"/>
    </location>
</feature>
<feature type="mutagenesis site" description="Partially suppresses inhibition of mast cell activation. Abolishes inhibition of mast cell activation; when associated with F-300." evidence="4">
    <original>Y</original>
    <variation>F</variation>
    <location>
        <position position="322"/>
    </location>
</feature>
<reference key="1">
    <citation type="journal article" date="1994" name="J. Biol. Chem.">
        <title>Cloning of the gp49B gene of the immunoglobulin superfamily and demonstration that one of its two products is an early-expressed mast cell surface protein originally described as gp49.</title>
        <authorList>
            <person name="Castells M.C."/>
            <person name="Wu X."/>
            <person name="Arm J.P."/>
            <person name="Austen K.F."/>
            <person name="Katz H.R."/>
        </authorList>
    </citation>
    <scope>NUCLEOTIDE SEQUENCE [MRNA] (ISOFORMS 1 AND 2)</scope>
    <source>
        <strain>BALB/cJ</strain>
        <strain>C3H/HeJ</strain>
        <tissue>Bone marrow</tissue>
    </source>
</reference>
<reference key="2">
    <citation type="journal article" date="2004" name="Genome Res.">
        <title>The status, quality, and expansion of the NIH full-length cDNA project: the Mammalian Gene Collection (MGC).</title>
        <authorList>
            <consortium name="The MGC Project Team"/>
        </authorList>
    </citation>
    <scope>NUCLEOTIDE SEQUENCE [LARGE SCALE MRNA] (ISOFORM 1)</scope>
    <source>
        <strain>FVB/N</strain>
        <tissue>Mammary gland</tissue>
    </source>
</reference>
<reference key="3">
    <citation type="journal article" date="1996" name="Proc. Natl. Acad. Sci. U.S.A.">
        <title>Mouse mast cell gp49B1 contains two immunoreceptor tyrosine-based inhibition motifs and suppresses mast cell activation when coligated with the high-affinity Fc receptor for IgE.</title>
        <authorList>
            <person name="Katz H.R."/>
            <person name="Vivier E."/>
            <person name="Castells M.C."/>
            <person name="McCormick M.J."/>
            <person name="Chambers J.M."/>
            <person name="Austen K.F."/>
        </authorList>
    </citation>
    <scope>FUNCTION</scope>
    <scope>SUBCELLULAR LOCATION</scope>
    <scope>ITIM MOTIFS</scope>
</reference>
<reference key="4">
    <citation type="journal article" date="1997" name="Dev. Growth Differ.">
        <title>gp49B1, an inhibitory signaling receptor gene of hematopoietic cells, is induced by leukemia inhibitory factor in the uterine endometrium just before implantation.</title>
        <authorList>
            <person name="Matsumoto Y."/>
            <person name="Handa S."/>
            <person name="Taki T."/>
        </authorList>
    </citation>
    <scope>TISSUE SPECIFICITY</scope>
    <scope>INDUCTION</scope>
</reference>
<reference key="5">
    <citation type="journal article" date="1997" name="J. Immunol.">
        <title>Type I transmembrane receptor with inhibitory function in mouse mast cells and NK cells.</title>
        <authorList>
            <person name="Rojo S."/>
            <person name="Burshtyn D.N."/>
            <person name="Long E.O."/>
            <person name="Wagtmann N."/>
        </authorList>
    </citation>
    <scope>FUNCTION</scope>
    <scope>SUBCELLULAR LOCATION</scope>
    <scope>TISSUE SPECIFICITY</scope>
</reference>
<reference key="6">
    <citation type="journal article" date="1997" name="J. Immunol.">
        <title>Mouse natural killer cells express gp49B1, a structural homologue of human killer inhibitory receptors.</title>
        <authorList>
            <person name="Wang L.L."/>
            <person name="Mehta I.K."/>
            <person name="LeBlanc P.A."/>
            <person name="Yokoyama W.M."/>
        </authorList>
    </citation>
    <scope>TISSUE SPECIFICITY</scope>
</reference>
<reference key="7">
    <citation type="journal article" date="1998" name="J. Biol. Chem.">
        <title>Association of tyrosine phosphatases SHP-1 and SHP-2, inositol 5-phosphatase SHIP with gp49B1, and chromosomal assignment of the gene.</title>
        <authorList>
            <person name="Kuroiwa A."/>
            <person name="Yamashita Y."/>
            <person name="Inui M."/>
            <person name="Yuasa T."/>
            <person name="Ono M."/>
            <person name="Nagabukuro A."/>
            <person name="Matsuda Y."/>
            <person name="Takai T."/>
        </authorList>
    </citation>
    <scope>ITIM MOTIFS</scope>
</reference>
<reference key="8">
    <citation type="journal article" date="1999" name="J. Biol. Chem.">
        <title>gp49B1 inhibits IgE-initiated mast cell activation through both immunoreceptor tyrosine-based inhibitory motifs, recruitment of src homology 2 domain-containing phosphatase-1, and suppression of early and late calcium mobilization.</title>
        <authorList>
            <person name="Lu-Kuo J.M."/>
            <person name="Joyal D.M."/>
            <person name="Austen K.F."/>
            <person name="Katz H.R."/>
        </authorList>
    </citation>
    <scope>FUNCTION</scope>
    <scope>INTERACTION WITH PTPN6 AND PTPN11</scope>
    <scope>PHOSPHORYLATION</scope>
    <scope>MUTAGENESIS OF TYR-300 AND TYR-322</scope>
</reference>
<reference key="9">
    <citation type="journal article" date="1999" name="J. Immunol.">
        <title>Specificity of the SH2 domains of SHP-1 in the interaction with the immunoreceptor tyrosine-based inhibitory motif-bearing receptor gp49B.</title>
        <authorList>
            <person name="Wang L.L."/>
            <person name="Blasioli J."/>
            <person name="Plas D.R."/>
            <person name="Thomas M.L."/>
            <person name="Yokoyama W.M."/>
        </authorList>
    </citation>
    <scope>INTERACTION WITH PTPN6</scope>
    <scope>ITIM MOTIFS</scope>
    <scope>PHOSPHORYLATION</scope>
</reference>
<reference key="10">
    <citation type="journal article" date="2000" name="Mol. Cell. Biol.">
        <title>Natural killer cells and mast cells from gp49B null mutant mice are functional.</title>
        <authorList>
            <person name="Rojo S."/>
            <person name="Stebbins C.C."/>
            <person name="Peterson M.E."/>
            <person name="Dombrowicz D."/>
            <person name="Wagtmann N."/>
            <person name="Long E.O."/>
        </authorList>
    </citation>
    <scope>SUBCELLULAR LOCATION</scope>
    <scope>DISRUPTION PHENOTYPE</scope>
</reference>
<reference key="11">
    <citation type="journal article" date="2001" name="J. Exp. Med.">
        <title>Increased severity of local and systemic anaphylactic reactions in gp49B1-deficient mice.</title>
        <authorList>
            <person name="Daheshia M."/>
            <person name="Friend D.S."/>
            <person name="Grusby M.J."/>
            <person name="Austen K.F."/>
            <person name="Katz H.R."/>
        </authorList>
    </citation>
    <scope>FUNCTION</scope>
    <scope>TISSUE SPECIFICITY</scope>
    <scope>DISRUPTION PHENOTYPE</scope>
</reference>
<reference key="12">
    <citation type="journal article" date="2001" name="Nat. Immunol.">
        <title>gp49B1-alpha(v)beta3 interaction inhibits antigen-induced mast cell activation.</title>
        <authorList>
            <person name="Castells M.C."/>
            <person name="Klickstein L.B."/>
            <person name="Hassani K."/>
            <person name="Cumplido J.A."/>
            <person name="Lacouture M.E."/>
            <person name="Austen K.F."/>
            <person name="Katz H.R."/>
        </authorList>
    </citation>
    <scope>FUNCTION</scope>
    <scope>SUBCELLULAR LOCATION</scope>
</reference>
<reference key="13">
    <citation type="journal article" date="2003" name="Eur. J. Immunol.">
        <title>gp49B1 suppresses stem cell factor-induced mast cell activation-secretion and attendant inflammation in vivo.</title>
        <authorList>
            <person name="Feldweg A.M."/>
            <person name="Friend D.S."/>
            <person name="Zhou J.S."/>
            <person name="Kanaoka Y."/>
            <person name="Daheshia M."/>
            <person name="Li L."/>
            <person name="Austen K.F."/>
            <person name="Katz H.R."/>
        </authorList>
    </citation>
    <scope>FUNCTION</scope>
    <scope>DISRUPTION PHENOTYPE</scope>
</reference>
<reference key="14">
    <citation type="journal article" date="2003" name="J. Exp. Med.">
        <title>Prevention of lipopolysaccharide-induced microangiopathy by gp49B1: evidence for an important role for gp49B1 expression on neutrophils.</title>
        <authorList>
            <person name="Zhou J.S."/>
            <person name="Friend D.S."/>
            <person name="Feldweg A.M."/>
            <person name="Daheshia M."/>
            <person name="Li L."/>
            <person name="Austen K.F."/>
            <person name="Katz H.R."/>
        </authorList>
    </citation>
    <scope>FUNCTION</scope>
    <scope>TISSUE SPECIFICITY</scope>
    <scope>INDUCTION</scope>
    <scope>DISRUPTION PHENOTYPE</scope>
</reference>
<reference key="15">
    <citation type="journal article" date="2003" name="J. Immunol.">
        <title>The gp49B1 inhibitory receptor regulates the IFN-gamma responses of T cells and NK cells.</title>
        <authorList>
            <person name="Gu X."/>
            <person name="Laouar A."/>
            <person name="Wan J."/>
            <person name="Daheshia M."/>
            <person name="Lieberman J."/>
            <person name="Yokoyama W.M."/>
            <person name="Katz H.R."/>
            <person name="Manjunath N."/>
        </authorList>
    </citation>
    <scope>FUNCTION</scope>
    <scope>TISSUE SPECIFICITY</scope>
    <scope>DISRUPTION PHENOTYPE</scope>
</reference>
<reference key="16">
    <citation type="journal article" date="2007" name="J. Leukoc. Biol.">
        <title>Inhibitory receptor gp49B regulates eosinophil infiltration during allergic inflammation.</title>
        <authorList>
            <person name="Norris H.H."/>
            <person name="Peterson M.E."/>
            <person name="Stebbins C.C."/>
            <person name="McConchie B.W."/>
            <person name="Bundoc V.G."/>
            <person name="Trivedi S."/>
            <person name="Hodges M.G."/>
            <person name="Anthony R.M."/>
            <person name="Urban J.F. Jr."/>
            <person name="Long E.O."/>
            <person name="Keane-Myers A.M."/>
        </authorList>
    </citation>
    <scope>FUNCTION</scope>
    <scope>TISSUE SPECIFICITY</scope>
    <scope>DISRUPTION PHENOTYPE</scope>
</reference>
<reference key="17">
    <citation type="journal article" date="2008" name="Eur. J. Immunol.">
        <title>A novel regulatory role of gp49B on dendritic cells in T-cell priming.</title>
        <authorList>
            <person name="Kasai S."/>
            <person name="Inui M."/>
            <person name="Nakamura K."/>
            <person name="Kakizaki Y."/>
            <person name="Endo S."/>
            <person name="Nakamura A."/>
            <person name="Ito S."/>
            <person name="Takai T."/>
        </authorList>
    </citation>
    <scope>FUNCTION</scope>
    <scope>TISSUE SPECIFICITY</scope>
    <scope>DISRUPTION PHENOTYPE</scope>
</reference>
<reference key="18">
    <citation type="journal article" date="2009" name="Immunity">
        <title>The phagosomal proteome in interferon-gamma-activated macrophages.</title>
        <authorList>
            <person name="Trost M."/>
            <person name="English L."/>
            <person name="Lemieux S."/>
            <person name="Courcelles M."/>
            <person name="Desjardins M."/>
            <person name="Thibault P."/>
        </authorList>
    </citation>
    <scope>IDENTIFICATION BY MASS SPECTROMETRY [LARGE SCALE ANALYSIS]</scope>
</reference>
<reference key="19">
    <citation type="journal article" date="2014" name="J. Immunol.">
        <title>gp49B-mediated negative regulation of antibody production by memory and marginal zone B cells.</title>
        <authorList>
            <person name="Fukao S."/>
            <person name="Haniuda K."/>
            <person name="Nojima T."/>
            <person name="Takai T."/>
            <person name="Kitamura D."/>
        </authorList>
    </citation>
    <scope>FUNCTION</scope>
    <scope>TISSUE SPECIFICITY</scope>
    <scope>DISRUPTION PHENOTYPE</scope>
</reference>
<reference key="20">
    <citation type="journal article" date="2021" name="Int. Immunol.">
        <title>Blockade of checkpoint ILT3/LILRB4/gp49B binding to fibronectin ameliorates autoimmune disease in BXSB/Yaa mice.</title>
        <authorList>
            <person name="Su M.T."/>
            <person name="Inui M."/>
            <person name="Wong Y.L."/>
            <person name="Takahashi M."/>
            <person name="Sugahara-Tobinai A."/>
            <person name="Ono K."/>
            <person name="Miyamoto S."/>
            <person name="Murakami K."/>
            <person name="Itoh-Nakadai A."/>
            <person name="Kezuka D."/>
            <person name="Itoi S."/>
            <person name="Endo S."/>
            <person name="Hirayasu K."/>
            <person name="Arase H."/>
            <person name="Takai T."/>
        </authorList>
    </citation>
    <scope>FUNCTION</scope>
</reference>
<keyword id="KW-1064">Adaptive immunity</keyword>
<keyword id="KW-0025">Alternative splicing</keyword>
<keyword id="KW-1003">Cell membrane</keyword>
<keyword id="KW-1015">Disulfide bond</keyword>
<keyword id="KW-0325">Glycoprotein</keyword>
<keyword id="KW-0391">Immunity</keyword>
<keyword id="KW-0393">Immunoglobulin domain</keyword>
<keyword id="KW-0472">Membrane</keyword>
<keyword id="KW-0597">Phosphoprotein</keyword>
<keyword id="KW-0675">Receptor</keyword>
<keyword id="KW-1185">Reference proteome</keyword>
<keyword id="KW-0677">Repeat</keyword>
<keyword id="KW-0732">Signal</keyword>
<keyword id="KW-0812">Transmembrane</keyword>
<keyword id="KW-1133">Transmembrane helix</keyword>
<sequence length="335" mass="37544">MIAMLTVLLYLGLILEPRTAVQAGHLPKPIIWAEPGSVIAAYTSVITWCQGSWEAQYYHLYKEKSVNPWDTQVPLETRNKAKFNIPSMTTSYAGIYKCYYESAAGFSEHSDAMELVMTGAYENPSLSVYPSSNVTSGVSISFSCSSSIVFGRFILIQEGKHGLSWTLDSQHQANQPSYATFVLDAVTPNHNGTFRCYGYFRNEPQVWSKPSNSLDLMISETKDQSSTPTEDGLETYQKILIGVLVSFLLLFFLLLFLILIGYQYGHKKKANASVKNTQSENNAELNSWNPQNEDPQGIVYAQVKPSRLQKDTACKETQDVTYAQLCIRTQEQNNS</sequence>
<protein>
    <recommendedName>
        <fullName evidence="22">Leukocyte immunoglobulin-like receptor subfamily B member 4A</fullName>
    </recommendedName>
    <alternativeName>
        <fullName>Mast cell surface glycoprotein Gp49B</fullName>
    </alternativeName>
    <cdAntigenName>CD85k</cdAntigenName>
</protein>
<organism>
    <name type="scientific">Mus musculus</name>
    <name type="common">Mouse</name>
    <dbReference type="NCBI Taxonomy" id="10090"/>
    <lineage>
        <taxon>Eukaryota</taxon>
        <taxon>Metazoa</taxon>
        <taxon>Chordata</taxon>
        <taxon>Craniata</taxon>
        <taxon>Vertebrata</taxon>
        <taxon>Euteleostomi</taxon>
        <taxon>Mammalia</taxon>
        <taxon>Eutheria</taxon>
        <taxon>Euarchontoglires</taxon>
        <taxon>Glires</taxon>
        <taxon>Rodentia</taxon>
        <taxon>Myomorpha</taxon>
        <taxon>Muroidea</taxon>
        <taxon>Muridae</taxon>
        <taxon>Murinae</taxon>
        <taxon>Mus</taxon>
        <taxon>Mus</taxon>
    </lineage>
</organism>
<accession>Q64281</accession>
<accession>Q64312</accession>
<name>LRB4A_MOUSE</name>
<evidence type="ECO:0000250" key="1"/>
<evidence type="ECO:0000255" key="2"/>
<evidence type="ECO:0000255" key="3">
    <source>
        <dbReference type="PROSITE-ProRule" id="PRU00114"/>
    </source>
</evidence>
<evidence type="ECO:0000269" key="4">
    <source>
    </source>
</evidence>
<evidence type="ECO:0000269" key="5">
    <source>
    </source>
</evidence>
<evidence type="ECO:0000269" key="6">
    <source>
    </source>
</evidence>
<evidence type="ECO:0000269" key="7">
    <source>
    </source>
</evidence>
<evidence type="ECO:0000269" key="8">
    <source>
    </source>
</evidence>
<evidence type="ECO:0000269" key="9">
    <source>
    </source>
</evidence>
<evidence type="ECO:0000269" key="10">
    <source>
    </source>
</evidence>
<evidence type="ECO:0000269" key="11">
    <source>
    </source>
</evidence>
<evidence type="ECO:0000269" key="12">
    <source>
    </source>
</evidence>
<evidence type="ECO:0000269" key="13">
    <source>
    </source>
</evidence>
<evidence type="ECO:0000269" key="14">
    <source>
    </source>
</evidence>
<evidence type="ECO:0000269" key="15">
    <source>
    </source>
</evidence>
<evidence type="ECO:0000269" key="16">
    <source>
    </source>
</evidence>
<evidence type="ECO:0000269" key="17">
    <source>
    </source>
</evidence>
<evidence type="ECO:0000269" key="18">
    <source>
    </source>
</evidence>
<evidence type="ECO:0000269" key="19">
    <source>
    </source>
</evidence>
<evidence type="ECO:0000269" key="20">
    <source>
    </source>
</evidence>
<evidence type="ECO:0000303" key="21">
    <source>
    </source>
</evidence>
<evidence type="ECO:0000312" key="22">
    <source>
        <dbReference type="MGI" id="MGI:102701"/>
    </source>
</evidence>